<name>PIMT_PIG</name>
<reference evidence="4" key="1">
    <citation type="submission" date="2000-02" db="EMBL/GenBank/DDBJ databases">
        <title>Cloning and characterization of porcine brain PCMT.</title>
        <authorList>
            <person name="Koh E."/>
            <person name="Hong S."/>
        </authorList>
    </citation>
    <scope>NUCLEOTIDE SEQUENCE [MRNA]</scope>
</reference>
<reference evidence="4" key="2">
    <citation type="submission" date="1997-02" db="UniProtKB">
        <authorList>
            <person name="Hong S."/>
        </authorList>
    </citation>
    <scope>PROTEIN SEQUENCE OF 6-33</scope>
</reference>
<protein>
    <recommendedName>
        <fullName evidence="2">Protein-L-isoaspartate(D-aspartate) O-methyltransferase</fullName>
        <shortName>PIMT</shortName>
        <ecNumber evidence="2">2.1.1.77</ecNumber>
    </recommendedName>
    <alternativeName>
        <fullName>L-isoaspartyl protein carboxyl methyltransferase</fullName>
    </alternativeName>
    <alternativeName>
        <fullName>Protein L-isoaspartyl/D-aspartyl methyltransferase</fullName>
    </alternativeName>
    <alternativeName>
        <fullName>Protein-beta-aspartate methyltransferase</fullName>
    </alternativeName>
</protein>
<sequence length="227" mass="24646">MAWKSGGASHSELIHNLRKNGIIKTDKVFEVMLATDRSHYAKCNPYMDSPQSIGFQATISAPHMHAYALELLFDQLHEGAKALDVGSGSGILTACFARMVGPSGKVIGIDHIKELVDDSINNVRKDDPMLLSSGRVQLVVGDGRMGYAEEAPYDAIHVGAAAPVVPQALIDQLKPGGRLILPVGPAGGNQMLEQYDKLQDGSVKMKPLMGVIYVPLTDKEKQWSRWK</sequence>
<dbReference type="EC" id="2.1.1.77" evidence="2"/>
<dbReference type="EMBL" id="AF239700">
    <property type="protein sequence ID" value="AAL83718.1"/>
    <property type="molecule type" value="mRNA"/>
</dbReference>
<dbReference type="RefSeq" id="NP_001182709.1">
    <property type="nucleotide sequence ID" value="NM_001195780.1"/>
</dbReference>
<dbReference type="SMR" id="P80895"/>
<dbReference type="FunCoup" id="P80895">
    <property type="interactions" value="382"/>
</dbReference>
<dbReference type="STRING" id="9823.ENSSSCP00000004436"/>
<dbReference type="PaxDb" id="9823-ENSSSCP00000004436"/>
<dbReference type="PeptideAtlas" id="P80895"/>
<dbReference type="GeneID" id="100502562"/>
<dbReference type="KEGG" id="ssc:100502562"/>
<dbReference type="CTD" id="5110"/>
<dbReference type="eggNOG" id="KOG1661">
    <property type="taxonomic scope" value="Eukaryota"/>
</dbReference>
<dbReference type="HOGENOM" id="CLU_055432_0_0_1"/>
<dbReference type="InParanoid" id="P80895"/>
<dbReference type="OrthoDB" id="73890at2759"/>
<dbReference type="Reactome" id="R-SSC-5676934">
    <property type="pathway name" value="Protein repair"/>
</dbReference>
<dbReference type="SABIO-RK" id="P80895"/>
<dbReference type="Proteomes" id="UP000008227">
    <property type="component" value="Unplaced"/>
</dbReference>
<dbReference type="Proteomes" id="UP000314985">
    <property type="component" value="Unplaced"/>
</dbReference>
<dbReference type="Proteomes" id="UP000694570">
    <property type="component" value="Unplaced"/>
</dbReference>
<dbReference type="Proteomes" id="UP000694571">
    <property type="component" value="Unplaced"/>
</dbReference>
<dbReference type="Proteomes" id="UP000694720">
    <property type="component" value="Unplaced"/>
</dbReference>
<dbReference type="Proteomes" id="UP000694722">
    <property type="component" value="Unplaced"/>
</dbReference>
<dbReference type="Proteomes" id="UP000694723">
    <property type="component" value="Unplaced"/>
</dbReference>
<dbReference type="Proteomes" id="UP000694724">
    <property type="component" value="Unplaced"/>
</dbReference>
<dbReference type="Proteomes" id="UP000694725">
    <property type="component" value="Unplaced"/>
</dbReference>
<dbReference type="Proteomes" id="UP000694726">
    <property type="component" value="Unplaced"/>
</dbReference>
<dbReference type="Proteomes" id="UP000694727">
    <property type="component" value="Unplaced"/>
</dbReference>
<dbReference type="Proteomes" id="UP000694728">
    <property type="component" value="Unplaced"/>
</dbReference>
<dbReference type="GO" id="GO:0005737">
    <property type="term" value="C:cytoplasm"/>
    <property type="evidence" value="ECO:0000318"/>
    <property type="project" value="GO_Central"/>
</dbReference>
<dbReference type="GO" id="GO:0005829">
    <property type="term" value="C:cytosol"/>
    <property type="evidence" value="ECO:0007669"/>
    <property type="project" value="UniProtKB-SubCell"/>
</dbReference>
<dbReference type="GO" id="GO:0004719">
    <property type="term" value="F:protein-L-isoaspartate (D-aspartate) O-methyltransferase activity"/>
    <property type="evidence" value="ECO:0000250"/>
    <property type="project" value="UniProtKB"/>
</dbReference>
<dbReference type="GO" id="GO:0006479">
    <property type="term" value="P:protein methylation"/>
    <property type="evidence" value="ECO:0000250"/>
    <property type="project" value="UniProtKB"/>
</dbReference>
<dbReference type="CDD" id="cd02440">
    <property type="entry name" value="AdoMet_MTases"/>
    <property type="match status" value="1"/>
</dbReference>
<dbReference type="FunFam" id="3.40.50.150:FF:000027">
    <property type="entry name" value="Protein-L-isoaspartate O-methyltransferase"/>
    <property type="match status" value="1"/>
</dbReference>
<dbReference type="Gene3D" id="3.40.50.150">
    <property type="entry name" value="Vaccinia Virus protein VP39"/>
    <property type="match status" value="1"/>
</dbReference>
<dbReference type="InterPro" id="IPR000682">
    <property type="entry name" value="PCMT"/>
</dbReference>
<dbReference type="InterPro" id="IPR029063">
    <property type="entry name" value="SAM-dependent_MTases_sf"/>
</dbReference>
<dbReference type="NCBIfam" id="TIGR00080">
    <property type="entry name" value="pimt"/>
    <property type="match status" value="1"/>
</dbReference>
<dbReference type="PANTHER" id="PTHR11579">
    <property type="entry name" value="PROTEIN-L-ISOASPARTATE O-METHYLTRANSFERASE"/>
    <property type="match status" value="1"/>
</dbReference>
<dbReference type="PANTHER" id="PTHR11579:SF7">
    <property type="entry name" value="PROTEIN-L-ISOASPARTATE(D-ASPARTATE) O-METHYLTRANSFERASE"/>
    <property type="match status" value="1"/>
</dbReference>
<dbReference type="Pfam" id="PF01135">
    <property type="entry name" value="PCMT"/>
    <property type="match status" value="1"/>
</dbReference>
<dbReference type="SUPFAM" id="SSF53335">
    <property type="entry name" value="S-adenosyl-L-methionine-dependent methyltransferases"/>
    <property type="match status" value="1"/>
</dbReference>
<dbReference type="PROSITE" id="PS01279">
    <property type="entry name" value="PCMT"/>
    <property type="match status" value="1"/>
</dbReference>
<comment type="function">
    <text evidence="2">Initiates the repair of damaged proteins by catalyzing methyl esterification of L-isoaspartyl and D-aspartyl residues produced by spontaneous isomerization and racemization of L-aspartyl and L-asparaginyl residues in aging peptides and proteins (By similarity). Acts on EIF4EBP2, microtubule-associated protein 2, calreticulin, clathrin light chains a and b, Ubiquitin C-terminal hydrolase isozyme L1, phosphatidylethanolamine-binding protein 1, stathmin, beta-synuclein and alpha-synuclein (By similarity).</text>
</comment>
<comment type="catalytic activity">
    <reaction evidence="2">
        <text>[protein]-L-isoaspartate + S-adenosyl-L-methionine = [protein]-L-isoaspartate alpha-methyl ester + S-adenosyl-L-homocysteine</text>
        <dbReference type="Rhea" id="RHEA:12705"/>
        <dbReference type="Rhea" id="RHEA-COMP:12143"/>
        <dbReference type="Rhea" id="RHEA-COMP:12144"/>
        <dbReference type="ChEBI" id="CHEBI:57856"/>
        <dbReference type="ChEBI" id="CHEBI:59789"/>
        <dbReference type="ChEBI" id="CHEBI:90596"/>
        <dbReference type="ChEBI" id="CHEBI:90598"/>
        <dbReference type="EC" id="2.1.1.77"/>
    </reaction>
    <physiologicalReaction direction="left-to-right" evidence="2">
        <dbReference type="Rhea" id="RHEA:12706"/>
    </physiologicalReaction>
</comment>
<comment type="subunit">
    <text evidence="1">Monomer.</text>
</comment>
<comment type="subcellular location">
    <subcellularLocation>
        <location evidence="1">Cytoplasm</location>
        <location evidence="1">Cytosol</location>
    </subcellularLocation>
</comment>
<comment type="similarity">
    <text evidence="4">Belongs to the methyltransferase superfamily. L-isoaspartyl/D-aspartyl protein methyltransferase family.</text>
</comment>
<keyword id="KW-0007">Acetylation</keyword>
<keyword id="KW-0963">Cytoplasm</keyword>
<keyword id="KW-0903">Direct protein sequencing</keyword>
<keyword id="KW-0489">Methyltransferase</keyword>
<keyword id="KW-1185">Reference proteome</keyword>
<keyword id="KW-0949">S-adenosyl-L-methionine</keyword>
<keyword id="KW-0808">Transferase</keyword>
<accession>P80895</accession>
<accession>Q8SQ35</accession>
<organism>
    <name type="scientific">Sus scrofa</name>
    <name type="common">Pig</name>
    <dbReference type="NCBI Taxonomy" id="9823"/>
    <lineage>
        <taxon>Eukaryota</taxon>
        <taxon>Metazoa</taxon>
        <taxon>Chordata</taxon>
        <taxon>Craniata</taxon>
        <taxon>Vertebrata</taxon>
        <taxon>Euteleostomi</taxon>
        <taxon>Mammalia</taxon>
        <taxon>Eutheria</taxon>
        <taxon>Laurasiatheria</taxon>
        <taxon>Artiodactyla</taxon>
        <taxon>Suina</taxon>
        <taxon>Suidae</taxon>
        <taxon>Sus</taxon>
    </lineage>
</organism>
<evidence type="ECO:0000250" key="1">
    <source>
        <dbReference type="UniProtKB" id="P22061"/>
    </source>
</evidence>
<evidence type="ECO:0000250" key="2">
    <source>
        <dbReference type="UniProtKB" id="P23506"/>
    </source>
</evidence>
<evidence type="ECO:0000250" key="3">
    <source>
        <dbReference type="UniProtKB" id="Q27869"/>
    </source>
</evidence>
<evidence type="ECO:0000305" key="4"/>
<proteinExistence type="evidence at protein level"/>
<gene>
    <name evidence="1" type="primary">PCMT1</name>
</gene>
<feature type="initiator methionine" description="Removed" evidence="1">
    <location>
        <position position="1"/>
    </location>
</feature>
<feature type="chain" id="PRO_0000111877" description="Protein-L-isoaspartate(D-aspartate) O-methyltransferase">
    <location>
        <begin position="2"/>
        <end position="227"/>
    </location>
</feature>
<feature type="active site" evidence="3">
    <location>
        <position position="60"/>
    </location>
</feature>
<feature type="binding site" evidence="1">
    <location>
        <begin position="57"/>
        <end position="60"/>
    </location>
    <ligand>
        <name>S-adenosyl-L-homocysteine</name>
        <dbReference type="ChEBI" id="CHEBI:57856"/>
    </ligand>
</feature>
<feature type="binding site" evidence="1">
    <location>
        <position position="65"/>
    </location>
    <ligand>
        <name>S-adenosyl-L-homocysteine</name>
        <dbReference type="ChEBI" id="CHEBI:57856"/>
    </ligand>
</feature>
<feature type="binding site" evidence="1">
    <location>
        <position position="89"/>
    </location>
    <ligand>
        <name>S-adenosyl-L-homocysteine</name>
        <dbReference type="ChEBI" id="CHEBI:57856"/>
    </ligand>
</feature>
<feature type="binding site" evidence="1">
    <location>
        <begin position="110"/>
        <end position="111"/>
    </location>
    <ligand>
        <name>S-adenosyl-L-homocysteine</name>
        <dbReference type="ChEBI" id="CHEBI:57856"/>
    </ligand>
</feature>
<feature type="binding site" evidence="1">
    <location>
        <begin position="142"/>
        <end position="143"/>
    </location>
    <ligand>
        <name>S-adenosyl-L-homocysteine</name>
        <dbReference type="ChEBI" id="CHEBI:57856"/>
    </ligand>
</feature>
<feature type="binding site" evidence="1">
    <location>
        <position position="217"/>
    </location>
    <ligand>
        <name>S-adenosyl-L-homocysteine</name>
        <dbReference type="ChEBI" id="CHEBI:57856"/>
    </ligand>
</feature>
<feature type="binding site" evidence="1">
    <location>
        <position position="222"/>
    </location>
    <ligand>
        <name>S-adenosyl-L-homocysteine</name>
        <dbReference type="ChEBI" id="CHEBI:57856"/>
    </ligand>
</feature>
<feature type="modified residue" description="N-acetylalanine" evidence="1">
    <location>
        <position position="2"/>
    </location>
</feature>